<proteinExistence type="inferred from homology"/>
<accession>Q86ZM3</accession>
<accession>A0A090CLJ5</accession>
<name>3DHQ_PODAN</name>
<organism>
    <name type="scientific">Podospora anserina (strain S / ATCC MYA-4624 / DSM 980 / FGSC 10383)</name>
    <name type="common">Pleurage anserina</name>
    <dbReference type="NCBI Taxonomy" id="515849"/>
    <lineage>
        <taxon>Eukaryota</taxon>
        <taxon>Fungi</taxon>
        <taxon>Dikarya</taxon>
        <taxon>Ascomycota</taxon>
        <taxon>Pezizomycotina</taxon>
        <taxon>Sordariomycetes</taxon>
        <taxon>Sordariomycetidae</taxon>
        <taxon>Sordariales</taxon>
        <taxon>Podosporaceae</taxon>
        <taxon>Podospora</taxon>
        <taxon>Podospora anserina</taxon>
    </lineage>
</organism>
<reference key="1">
    <citation type="journal article" date="2003" name="Fungal Genet. Biol.">
        <title>Characterization of the genomic organization of the region bordering the centromere of chromosome V of Podospora anserina by direct sequencing.</title>
        <authorList>
            <person name="Silar P."/>
            <person name="Barreau C."/>
            <person name="Debuchy R."/>
            <person name="Kicka S."/>
            <person name="Turcq B."/>
            <person name="Sainsard-Chanet A."/>
            <person name="Sellem C.H."/>
            <person name="Billault A."/>
            <person name="Cattolico L."/>
            <person name="Duprat S."/>
            <person name="Weissenbach J."/>
        </authorList>
    </citation>
    <scope>NUCLEOTIDE SEQUENCE [LARGE SCALE GENOMIC DNA]</scope>
    <source>
        <strain>s</strain>
    </source>
</reference>
<reference key="2">
    <citation type="journal article" date="2008" name="Genome Biol.">
        <title>The genome sequence of the model ascomycete fungus Podospora anserina.</title>
        <authorList>
            <person name="Espagne E."/>
            <person name="Lespinet O."/>
            <person name="Malagnac F."/>
            <person name="Da Silva C."/>
            <person name="Jaillon O."/>
            <person name="Porcel B.M."/>
            <person name="Couloux A."/>
            <person name="Aury J.-M."/>
            <person name="Segurens B."/>
            <person name="Poulain J."/>
            <person name="Anthouard V."/>
            <person name="Grossetete S."/>
            <person name="Khalili H."/>
            <person name="Coppin E."/>
            <person name="Dequard-Chablat M."/>
            <person name="Picard M."/>
            <person name="Contamine V."/>
            <person name="Arnaise S."/>
            <person name="Bourdais A."/>
            <person name="Berteaux-Lecellier V."/>
            <person name="Gautheret D."/>
            <person name="de Vries R.P."/>
            <person name="Battaglia E."/>
            <person name="Coutinho P.M."/>
            <person name="Danchin E.G.J."/>
            <person name="Henrissat B."/>
            <person name="El Khoury R."/>
            <person name="Sainsard-Chanet A."/>
            <person name="Boivin A."/>
            <person name="Pinan-Lucarre B."/>
            <person name="Sellem C.H."/>
            <person name="Debuchy R."/>
            <person name="Wincker P."/>
            <person name="Weissenbach J."/>
            <person name="Silar P."/>
        </authorList>
    </citation>
    <scope>NUCLEOTIDE SEQUENCE [LARGE SCALE GENOMIC DNA]</scope>
    <source>
        <strain>S / ATCC MYA-4624 / DSM 980 / FGSC 10383</strain>
    </source>
</reference>
<reference key="3">
    <citation type="journal article" date="2014" name="Genetics">
        <title>Maintaining two mating types: Structure of the mating type locus and its role in heterokaryosis in Podospora anserina.</title>
        <authorList>
            <person name="Grognet P."/>
            <person name="Bidard F."/>
            <person name="Kuchly C."/>
            <person name="Tong L.C.H."/>
            <person name="Coppin E."/>
            <person name="Benkhali J.A."/>
            <person name="Couloux A."/>
            <person name="Wincker P."/>
            <person name="Debuchy R."/>
            <person name="Silar P."/>
        </authorList>
    </citation>
    <scope>GENOME REANNOTATION</scope>
    <source>
        <strain>S / ATCC MYA-4624 / DSM 980 / FGSC 10383</strain>
    </source>
</reference>
<evidence type="ECO:0000255" key="1">
    <source>
        <dbReference type="HAMAP-Rule" id="MF_03136"/>
    </source>
</evidence>
<sequence>MSRRVLLINGPNLNLLGKREPHIYGSTTLEDIETQARQQAHELGVEIDTFQSNHEGAIVDRIQETAGWGPNVRETDTPGKRVSAIIINAGALTHTSVAVRDALAAVAIPFVELHVSNVHARETFRAHSYLSDKAVAVICGMGAYGYSAAIEFAAKHLKIEGE</sequence>
<comment type="function">
    <text evidence="1">Is involved in the catabolism of quinate. Allows the utilization of quinate as carbon source via the beta-ketoadipate pathway.</text>
</comment>
<comment type="catalytic activity">
    <reaction evidence="1">
        <text>3-dehydroquinate = 3-dehydroshikimate + H2O</text>
        <dbReference type="Rhea" id="RHEA:21096"/>
        <dbReference type="ChEBI" id="CHEBI:15377"/>
        <dbReference type="ChEBI" id="CHEBI:16630"/>
        <dbReference type="ChEBI" id="CHEBI:32364"/>
        <dbReference type="EC" id="4.2.1.10"/>
    </reaction>
</comment>
<comment type="pathway">
    <text evidence="1">Aromatic compound metabolism; 3,4-dihydroxybenzoate biosynthesis; 3,4-dihydroxybenzoate from 3-dehydroquinate: step 1/2.</text>
</comment>
<comment type="subunit">
    <text evidence="1">Homododecamer. Adopts a ring-like structure, composed of an arrangement of two hexameric rings stacked on top of one another.</text>
</comment>
<comment type="similarity">
    <text evidence="1">Belongs to the type-II 3-dehydroquinase family.</text>
</comment>
<feature type="chain" id="PRO_0000402376" description="Catabolic 3-dehydroquinase">
    <location>
        <begin position="1"/>
        <end position="162"/>
    </location>
</feature>
<feature type="active site" description="Proton acceptor" evidence="1">
    <location>
        <position position="24"/>
    </location>
</feature>
<feature type="active site" description="Proton donor" evidence="1">
    <location>
        <position position="114"/>
    </location>
</feature>
<feature type="binding site" evidence="1">
    <location>
        <position position="88"/>
    </location>
    <ligand>
        <name>substrate</name>
    </ligand>
</feature>
<feature type="binding site" evidence="1">
    <location>
        <position position="94"/>
    </location>
    <ligand>
        <name>substrate</name>
    </ligand>
</feature>
<feature type="binding site" evidence="1">
    <location>
        <position position="101"/>
    </location>
    <ligand>
        <name>substrate</name>
    </ligand>
</feature>
<feature type="binding site" evidence="1">
    <location>
        <begin position="115"/>
        <end position="116"/>
    </location>
    <ligand>
        <name>substrate</name>
    </ligand>
</feature>
<feature type="binding site" evidence="1">
    <location>
        <position position="125"/>
    </location>
    <ligand>
        <name>substrate</name>
    </ligand>
</feature>
<feature type="site" description="Transition state stabilizer" evidence="1">
    <location>
        <position position="19"/>
    </location>
</feature>
<dbReference type="EC" id="4.2.1.10" evidence="1"/>
<dbReference type="EMBL" id="AL627362">
    <property type="protein sequence ID" value="CAD60600.1"/>
    <property type="molecule type" value="Genomic_DNA"/>
</dbReference>
<dbReference type="EMBL" id="CU633871">
    <property type="protein sequence ID" value="CAP65280.1"/>
    <property type="molecule type" value="Genomic_DNA"/>
</dbReference>
<dbReference type="EMBL" id="FO904940">
    <property type="protein sequence ID" value="CDP29491.1"/>
    <property type="molecule type" value="Genomic_DNA"/>
</dbReference>
<dbReference type="RefSeq" id="XP_001905370.1">
    <property type="nucleotide sequence ID" value="XM_001905335.1"/>
</dbReference>
<dbReference type="SMR" id="Q86ZM3"/>
<dbReference type="STRING" id="515849.Q86ZM3"/>
<dbReference type="GeneID" id="6189500"/>
<dbReference type="KEGG" id="pan:PODANSg2395"/>
<dbReference type="VEuPathDB" id="FungiDB:PODANS_5_5130"/>
<dbReference type="eggNOG" id="ENOG502S1A9">
    <property type="taxonomic scope" value="Eukaryota"/>
</dbReference>
<dbReference type="HOGENOM" id="CLU_090968_1_0_1"/>
<dbReference type="InParanoid" id="Q86ZM3"/>
<dbReference type="OrthoDB" id="8191625at2759"/>
<dbReference type="UniPathway" id="UPA00088">
    <property type="reaction ID" value="UER00178"/>
</dbReference>
<dbReference type="Proteomes" id="UP000001197">
    <property type="component" value="Chromosome 5"/>
</dbReference>
<dbReference type="GO" id="GO:0003855">
    <property type="term" value="F:3-dehydroquinate dehydratase activity"/>
    <property type="evidence" value="ECO:0007669"/>
    <property type="project" value="UniProtKB-UniRule"/>
</dbReference>
<dbReference type="GO" id="GO:0046279">
    <property type="term" value="P:3,4-dihydroxybenzoate biosynthetic process"/>
    <property type="evidence" value="ECO:0007669"/>
    <property type="project" value="UniProtKB-UniRule"/>
</dbReference>
<dbReference type="GO" id="GO:0019631">
    <property type="term" value="P:quinate catabolic process"/>
    <property type="evidence" value="ECO:0007669"/>
    <property type="project" value="TreeGrafter"/>
</dbReference>
<dbReference type="CDD" id="cd00466">
    <property type="entry name" value="DHQase_II"/>
    <property type="match status" value="1"/>
</dbReference>
<dbReference type="Gene3D" id="3.40.50.9100">
    <property type="entry name" value="Dehydroquinase, class II"/>
    <property type="match status" value="1"/>
</dbReference>
<dbReference type="HAMAP" id="MF_00169">
    <property type="entry name" value="AroQ"/>
    <property type="match status" value="1"/>
</dbReference>
<dbReference type="InterPro" id="IPR001874">
    <property type="entry name" value="DHquinase_II"/>
</dbReference>
<dbReference type="InterPro" id="IPR018509">
    <property type="entry name" value="DHquinase_II_CS"/>
</dbReference>
<dbReference type="InterPro" id="IPR036441">
    <property type="entry name" value="DHquinase_II_sf"/>
</dbReference>
<dbReference type="NCBIfam" id="TIGR01088">
    <property type="entry name" value="aroQ"/>
    <property type="match status" value="1"/>
</dbReference>
<dbReference type="NCBIfam" id="NF003804">
    <property type="entry name" value="PRK05395.1-1"/>
    <property type="match status" value="1"/>
</dbReference>
<dbReference type="NCBIfam" id="NF003805">
    <property type="entry name" value="PRK05395.1-2"/>
    <property type="match status" value="1"/>
</dbReference>
<dbReference type="NCBIfam" id="NF003806">
    <property type="entry name" value="PRK05395.1-3"/>
    <property type="match status" value="1"/>
</dbReference>
<dbReference type="NCBIfam" id="NF003807">
    <property type="entry name" value="PRK05395.1-4"/>
    <property type="match status" value="1"/>
</dbReference>
<dbReference type="PANTHER" id="PTHR21272">
    <property type="entry name" value="CATABOLIC 3-DEHYDROQUINASE"/>
    <property type="match status" value="1"/>
</dbReference>
<dbReference type="PANTHER" id="PTHR21272:SF3">
    <property type="entry name" value="CATABOLIC 3-DEHYDROQUINASE"/>
    <property type="match status" value="1"/>
</dbReference>
<dbReference type="Pfam" id="PF01220">
    <property type="entry name" value="DHquinase_II"/>
    <property type="match status" value="1"/>
</dbReference>
<dbReference type="PIRSF" id="PIRSF001399">
    <property type="entry name" value="DHquinase_II"/>
    <property type="match status" value="1"/>
</dbReference>
<dbReference type="SUPFAM" id="SSF52304">
    <property type="entry name" value="Type II 3-dehydroquinate dehydratase"/>
    <property type="match status" value="1"/>
</dbReference>
<dbReference type="PROSITE" id="PS01029">
    <property type="entry name" value="DEHYDROQUINASE_II"/>
    <property type="match status" value="1"/>
</dbReference>
<keyword id="KW-0456">Lyase</keyword>
<keyword id="KW-0672">Quinate metabolism</keyword>
<keyword id="KW-1185">Reference proteome</keyword>
<protein>
    <recommendedName>
        <fullName evidence="1">Catabolic 3-dehydroquinase</fullName>
        <shortName evidence="1">cDHQase</shortName>
        <ecNumber evidence="1">4.2.1.10</ecNumber>
    </recommendedName>
    <alternativeName>
        <fullName evidence="1">3-dehydroquinate dehydratase</fullName>
    </alternativeName>
</protein>
<gene>
    <name evidence="1" type="primary">qutE</name>
    <name type="ordered locus">Pa_5_5130</name>
    <name type="ORF">Pa5G0019</name>
    <name type="ORF">PODANS_5_5130</name>
</gene>